<evidence type="ECO:0000250" key="1">
    <source>
        <dbReference type="UniProtKB" id="P20966"/>
    </source>
</evidence>
<evidence type="ECO:0000250" key="2">
    <source>
        <dbReference type="UniProtKB" id="P23387"/>
    </source>
</evidence>
<evidence type="ECO:0000255" key="3">
    <source>
        <dbReference type="PROSITE-ProRule" id="PRU00422"/>
    </source>
</evidence>
<evidence type="ECO:0000255" key="4">
    <source>
        <dbReference type="PROSITE-ProRule" id="PRU00427"/>
    </source>
</evidence>
<evidence type="ECO:0000269" key="5">
    <source>
    </source>
</evidence>
<evidence type="ECO:0000269" key="6">
    <source>
    </source>
</evidence>
<evidence type="ECO:0000303" key="7">
    <source>
    </source>
</evidence>
<evidence type="ECO:0000305" key="8"/>
<evidence type="ECO:0000305" key="9">
    <source>
    </source>
</evidence>
<evidence type="ECO:0000305" key="10">
    <source>
    </source>
</evidence>
<gene>
    <name evidence="7" type="primary">fruA</name>
    <name type="ordered locus">XCC2372</name>
</gene>
<comment type="function">
    <text evidence="1 6 9">The phosphoenolpyruvate-dependent sugar phosphotransferase system (sugar PTS), a major carbohydrate active transport system, catalyzes the phosphorylation of incoming sugar substrates concomitantly with their translocation across the cell membrane. The enzyme II FruAB PTS system is involved in fructose transport.</text>
</comment>
<comment type="catalytic activity">
    <reaction evidence="1">
        <text>D-fructose(out) + N(pros)-phospho-L-histidyl-[protein] = D-fructose 1-phosphate(in) + L-histidyl-[protein]</text>
        <dbReference type="Rhea" id="RHEA:49252"/>
        <dbReference type="Rhea" id="RHEA-COMP:9745"/>
        <dbReference type="Rhea" id="RHEA-COMP:9746"/>
        <dbReference type="ChEBI" id="CHEBI:29979"/>
        <dbReference type="ChEBI" id="CHEBI:37721"/>
        <dbReference type="ChEBI" id="CHEBI:58674"/>
        <dbReference type="ChEBI" id="CHEBI:64837"/>
        <dbReference type="EC" id="2.7.1.202"/>
    </reaction>
</comment>
<comment type="subcellular location">
    <subcellularLocation>
        <location evidence="1 4">Cell inner membrane</location>
        <topology evidence="1 4">Multi-pass membrane protein</topology>
    </subcellularLocation>
</comment>
<comment type="induction">
    <text evidence="5">By fructose.</text>
</comment>
<comment type="domain">
    <text evidence="3">The PTS EIIB type-2 domain is phosphorylated by phospho-EIIA on a cysteinyl residue. Then, it transfers the phosphoryl group to the sugar substrate concomitantly with the sugar uptake processed by the PTS EIIC type-2 domain.</text>
</comment>
<comment type="domain">
    <text evidence="1">In the N-terminal, the PTS system fructose-specific possesses a duplicated EIIB domain (EIIB' domain) which lacks the active site and functions to facilitate phosphoryl transfer between the EIIA domain of diphosphoryl transfer protein (DTP) and the EIIB domain. The presence of the EIIB' domain is required for normal high affinity recognition of DTP by the PTS system fructose-specific as well as for normal rates of phosphoryl transfer between the EIIA and EIIB domains of DTP and PTS system fructose-specific, respectively.</text>
</comment>
<comment type="domain">
    <text evidence="4">The EIIC type-2 domain forms the PTS system translocation channel and contains the specific substrate-binding site.</text>
</comment>
<comment type="disruption phenotype">
    <text evidence="6">Cells lacking this gene grow normally on glucose but are unable to grow on fructose.</text>
</comment>
<name>PTFBC_XANCP</name>
<sequence>MSSSIVVIAAGERSTEAVLAAEALRRAATAAGRSVTIEIRSDQGVLGALPTELTNGAAHVLIVGDADADTARFGDAQLLHLSLGAVLDDPAAAVSQLAATTAPASTSATTDASGAGGKRIVAITSCPTGIAHTFMAAEGLQQAAKKLGYQMRVETQGSVGAQDALTDEEIRAADVVIIAADREVDLARFGGKRLFKSGTKPAINDGPALIQKALAEAGVHGGAAPVAGANATSDAKGNARTGAYKHLMTGVSFMLPFVTAGGLLIALAFALGGIYAGDDAHQGTLAWSLFQIGAKAGFTLMVPALAGYIAYSIADRPGIAPGMIGGLVAANLNAGFLGGIIAGFIAGYGVAALNRYIKLPRNLEGLKPVLILPVLGTLLVGLAMMYVFGQPVADLLAWLTAWLRGMQGSSALLLGLLLGGMMAFDMGGPVNKAAYAFSTGLIASQVYTPMAAAMVAGMTPPLGIALATWVFRNRFTVEERGSATAAGVLGLAFVTEGAIPYAARDPLRTIPALVIGSAVAGAISMTAGAELKAPHGGIFVLLIPNAVTHLLNYVLALVVGVVVTAVALRLLKKPVADVIA</sequence>
<organism>
    <name type="scientific">Xanthomonas campestris pv. campestris (strain ATCC 33913 / DSM 3586 / NCPPB 528 / LMG 568 / P 25)</name>
    <dbReference type="NCBI Taxonomy" id="190485"/>
    <lineage>
        <taxon>Bacteria</taxon>
        <taxon>Pseudomonadati</taxon>
        <taxon>Pseudomonadota</taxon>
        <taxon>Gammaproteobacteria</taxon>
        <taxon>Lysobacterales</taxon>
        <taxon>Lysobacteraceae</taxon>
        <taxon>Xanthomonas</taxon>
    </lineage>
</organism>
<keyword id="KW-0997">Cell inner membrane</keyword>
<keyword id="KW-1003">Cell membrane</keyword>
<keyword id="KW-0903">Direct protein sequencing</keyword>
<keyword id="KW-0418">Kinase</keyword>
<keyword id="KW-0472">Membrane</keyword>
<keyword id="KW-0597">Phosphoprotein</keyword>
<keyword id="KW-0598">Phosphotransferase system</keyword>
<keyword id="KW-1185">Reference proteome</keyword>
<keyword id="KW-0677">Repeat</keyword>
<keyword id="KW-0762">Sugar transport</keyword>
<keyword id="KW-0808">Transferase</keyword>
<keyword id="KW-0812">Transmembrane</keyword>
<keyword id="KW-1133">Transmembrane helix</keyword>
<keyword id="KW-0813">Transport</keyword>
<protein>
    <recommendedName>
        <fullName evidence="10">PTS system fructose-specific EIIB'BC component</fullName>
    </recommendedName>
    <alternativeName>
        <fullName evidence="10">EIIB'BC-Fru</fullName>
    </alternativeName>
    <domain>
        <recommendedName>
            <fullName evidence="7">PTS system fructose-specific EIIB component</fullName>
            <ecNumber evidence="1">2.7.1.202</ecNumber>
        </recommendedName>
        <alternativeName>
            <fullName evidence="1">EIII-Fru</fullName>
        </alternativeName>
        <alternativeName>
            <fullName evidence="7">Fructose-specific phosphotransferase enzyme IIB component</fullName>
        </alternativeName>
    </domain>
    <domain>
        <recommendedName>
            <fullName evidence="7">PTS system fructose-specific EIIC component</fullName>
        </recommendedName>
        <alternativeName>
            <fullName evidence="7">Fructose permease IIC component</fullName>
        </alternativeName>
    </domain>
</protein>
<feature type="chain" id="PRO_0000186515" description="PTS system fructose-specific EIIB'BC component">
    <location>
        <begin position="1"/>
        <end position="580"/>
    </location>
</feature>
<feature type="transmembrane region" description="Helical" evidence="4">
    <location>
        <begin position="254"/>
        <end position="274"/>
    </location>
</feature>
<feature type="transmembrane region" description="Helical" evidence="4">
    <location>
        <begin position="289"/>
        <end position="309"/>
    </location>
</feature>
<feature type="transmembrane region" description="Helical" evidence="4">
    <location>
        <begin position="332"/>
        <end position="352"/>
    </location>
</feature>
<feature type="transmembrane region" description="Helical" evidence="4">
    <location>
        <begin position="369"/>
        <end position="389"/>
    </location>
</feature>
<feature type="transmembrane region" description="Helical" evidence="4">
    <location>
        <begin position="410"/>
        <end position="430"/>
    </location>
</feature>
<feature type="transmembrane region" description="Helical" evidence="4">
    <location>
        <begin position="451"/>
        <end position="471"/>
    </location>
</feature>
<feature type="transmembrane region" description="Helical" evidence="4">
    <location>
        <begin position="483"/>
        <end position="503"/>
    </location>
</feature>
<feature type="transmembrane region" description="Helical" evidence="4">
    <location>
        <begin position="509"/>
        <end position="529"/>
    </location>
</feature>
<feature type="transmembrane region" description="Helical" evidence="4">
    <location>
        <begin position="549"/>
        <end position="571"/>
    </location>
</feature>
<feature type="domain" description="PTS EIIB type-2 1" evidence="2 10">
    <location>
        <begin position="1"/>
        <end position="99"/>
    </location>
</feature>
<feature type="domain" description="PTS EIIB type-2 2" evidence="3">
    <location>
        <begin position="120"/>
        <end position="215"/>
    </location>
</feature>
<feature type="domain" description="PTS EIIC type-2" evidence="4">
    <location>
        <begin position="243"/>
        <end position="580"/>
    </location>
</feature>
<feature type="active site" description="Phosphocysteine intermediate; for EIIB activity" evidence="1 10">
    <location>
        <position position="126"/>
    </location>
</feature>
<feature type="modified residue" description="Phosphocysteine; by EIIA" evidence="3">
    <location>
        <position position="126"/>
    </location>
</feature>
<feature type="sequence conflict" description="In Ref. 1; AAA27602." evidence="8" ref="1">
    <original>Q</original>
    <variation>H</variation>
    <location>
        <position position="150"/>
    </location>
</feature>
<feature type="sequence conflict" description="In Ref. 1; AAA27602." evidence="8" ref="1">
    <original>AGGLL</original>
    <variation>LAACW</variation>
    <location>
        <begin position="260"/>
        <end position="264"/>
    </location>
</feature>
<feature type="sequence conflict" description="In Ref. 1; AAA27602." evidence="8" ref="1">
    <original>V</original>
    <variation>L</variation>
    <location>
        <position position="350"/>
    </location>
</feature>
<feature type="sequence conflict" description="In Ref. 1; AAA27602." evidence="8" ref="1">
    <original>GS</original>
    <variation>AG</variation>
    <location>
        <begin position="408"/>
        <end position="409"/>
    </location>
</feature>
<feature type="sequence conflict" description="In Ref. 1; AAA27602." evidence="8" ref="1">
    <original>VT</original>
    <variation>DS</variation>
    <location>
        <begin position="494"/>
        <end position="495"/>
    </location>
</feature>
<feature type="sequence conflict" description="In Ref. 1; AAA27602." evidence="8" ref="1">
    <original>L</original>
    <variation>V</variation>
    <location>
        <position position="568"/>
    </location>
</feature>
<proteinExistence type="evidence at protein level"/>
<reference key="1">
    <citation type="journal article" date="1991" name="J. Biol. Chem.">
        <title>Fructose catabolism in Xanthomonas campestris pv. campestris. Sequence of the PTS operon, characterization of the fructose-specific enzymes.</title>
        <authorList>
            <person name="de Crecy-Lagard V."/>
            <person name="Bouvet O.M."/>
            <person name="Lejeune P."/>
            <person name="Danchin A."/>
        </authorList>
    </citation>
    <scope>NUCLEOTIDE SEQUENCE [GENOMIC DNA]</scope>
    <scope>FUNCTION</scope>
    <scope>DISRUPTION PHENOTYPE</scope>
    <scope>DOMAIN</scope>
    <scope>ACTIVE SITE</scope>
    <source>
        <strain>ATCC 13951 / NCIB 11803 / NRRL B-1459</strain>
    </source>
</reference>
<reference key="2">
    <citation type="journal article" date="2002" name="Nature">
        <title>Comparison of the genomes of two Xanthomonas pathogens with differing host specificities.</title>
        <authorList>
            <person name="da Silva A.C.R."/>
            <person name="Ferro J.A."/>
            <person name="Reinach F.C."/>
            <person name="Farah C.S."/>
            <person name="Furlan L.R."/>
            <person name="Quaggio R.B."/>
            <person name="Monteiro-Vitorello C.B."/>
            <person name="Van Sluys M.A."/>
            <person name="Almeida N.F. Jr."/>
            <person name="Alves L.M.C."/>
            <person name="do Amaral A.M."/>
            <person name="Bertolini M.C."/>
            <person name="Camargo L.E.A."/>
            <person name="Camarotte G."/>
            <person name="Cannavan F."/>
            <person name="Cardozo J."/>
            <person name="Chambergo F."/>
            <person name="Ciapina L.P."/>
            <person name="Cicarelli R.M.B."/>
            <person name="Coutinho L.L."/>
            <person name="Cursino-Santos J.R."/>
            <person name="El-Dorry H."/>
            <person name="Faria J.B."/>
            <person name="Ferreira A.J.S."/>
            <person name="Ferreira R.C.C."/>
            <person name="Ferro M.I.T."/>
            <person name="Formighieri E.F."/>
            <person name="Franco M.C."/>
            <person name="Greggio C.C."/>
            <person name="Gruber A."/>
            <person name="Katsuyama A.M."/>
            <person name="Kishi L.T."/>
            <person name="Leite R.P."/>
            <person name="Lemos E.G.M."/>
            <person name="Lemos M.V.F."/>
            <person name="Locali E.C."/>
            <person name="Machado M.A."/>
            <person name="Madeira A.M.B.N."/>
            <person name="Martinez-Rossi N.M."/>
            <person name="Martins E.C."/>
            <person name="Meidanis J."/>
            <person name="Menck C.F.M."/>
            <person name="Miyaki C.Y."/>
            <person name="Moon D.H."/>
            <person name="Moreira L.M."/>
            <person name="Novo M.T.M."/>
            <person name="Okura V.K."/>
            <person name="Oliveira M.C."/>
            <person name="Oliveira V.R."/>
            <person name="Pereira H.A."/>
            <person name="Rossi A."/>
            <person name="Sena J.A.D."/>
            <person name="Silva C."/>
            <person name="de Souza R.F."/>
            <person name="Spinola L.A.F."/>
            <person name="Takita M.A."/>
            <person name="Tamura R.E."/>
            <person name="Teixeira E.C."/>
            <person name="Tezza R.I.D."/>
            <person name="Trindade dos Santos M."/>
            <person name="Truffi D."/>
            <person name="Tsai S.M."/>
            <person name="White F.F."/>
            <person name="Setubal J.C."/>
            <person name="Kitajima J.P."/>
        </authorList>
    </citation>
    <scope>NUCLEOTIDE SEQUENCE [LARGE SCALE GENOMIC DNA]</scope>
    <source>
        <strain>ATCC 33913 / DSM 3586 / NCPPB 528 / LMG 568 / P 25</strain>
    </source>
</reference>
<reference key="3">
    <citation type="journal article" date="1991" name="Mol. Gen. Genet.">
        <title>Identification of two fructose transport and phosphorylation pathways in Xanthomonas campestris pv. campestris.</title>
        <authorList>
            <person name="de Crecy-Lagard V."/>
            <person name="Lejeune P."/>
            <person name="Bouvet O.M."/>
            <person name="Danchin A."/>
        </authorList>
    </citation>
    <scope>PROTEIN SEQUENCE OF 404-547</scope>
    <scope>FUNCTION</scope>
    <scope>INDUCTION</scope>
</reference>
<accession>P23355</accession>
<dbReference type="EC" id="2.7.1.202" evidence="1"/>
<dbReference type="EMBL" id="M69242">
    <property type="protein sequence ID" value="AAA27602.1"/>
    <property type="molecule type" value="Genomic_DNA"/>
</dbReference>
<dbReference type="EMBL" id="AE008922">
    <property type="protein sequence ID" value="AAM41650.1"/>
    <property type="molecule type" value="Genomic_DNA"/>
</dbReference>
<dbReference type="PIR" id="B40944">
    <property type="entry name" value="B40944"/>
</dbReference>
<dbReference type="RefSeq" id="NP_637726.1">
    <property type="nucleotide sequence ID" value="NC_003902.1"/>
</dbReference>
<dbReference type="RefSeq" id="WP_011037515.1">
    <property type="nucleotide sequence ID" value="NC_003902.1"/>
</dbReference>
<dbReference type="STRING" id="190485.XCC2372"/>
<dbReference type="EnsemblBacteria" id="AAM41650">
    <property type="protein sequence ID" value="AAM41650"/>
    <property type="gene ID" value="XCC2372"/>
</dbReference>
<dbReference type="KEGG" id="xcc:XCC2372"/>
<dbReference type="PATRIC" id="fig|190485.4.peg.2526"/>
<dbReference type="eggNOG" id="COG1299">
    <property type="taxonomic scope" value="Bacteria"/>
</dbReference>
<dbReference type="eggNOG" id="COG1445">
    <property type="taxonomic scope" value="Bacteria"/>
</dbReference>
<dbReference type="HOGENOM" id="CLU_013155_4_2_6"/>
<dbReference type="OrthoDB" id="9782569at2"/>
<dbReference type="Proteomes" id="UP000001010">
    <property type="component" value="Chromosome"/>
</dbReference>
<dbReference type="GO" id="GO:0005886">
    <property type="term" value="C:plasma membrane"/>
    <property type="evidence" value="ECO:0000318"/>
    <property type="project" value="GO_Central"/>
</dbReference>
<dbReference type="GO" id="GO:0005351">
    <property type="term" value="F:carbohydrate:proton symporter activity"/>
    <property type="evidence" value="ECO:0007669"/>
    <property type="project" value="InterPro"/>
</dbReference>
<dbReference type="GO" id="GO:0016301">
    <property type="term" value="F:kinase activity"/>
    <property type="evidence" value="ECO:0007669"/>
    <property type="project" value="UniProtKB-KW"/>
</dbReference>
<dbReference type="GO" id="GO:0022877">
    <property type="term" value="F:protein-N(PI)-phosphohistidine-fructose phosphotransferase system transporter activity"/>
    <property type="evidence" value="ECO:0007669"/>
    <property type="project" value="InterPro"/>
</dbReference>
<dbReference type="GO" id="GO:0090582">
    <property type="term" value="F:protein-phosphocysteine-D-fructose-phosphotransferase system transporter activity"/>
    <property type="evidence" value="ECO:0000250"/>
    <property type="project" value="UniProtKB"/>
</dbReference>
<dbReference type="GO" id="GO:0090563">
    <property type="term" value="F:protein-phosphocysteine-sugar phosphotransferase activity"/>
    <property type="evidence" value="ECO:0000318"/>
    <property type="project" value="GO_Central"/>
</dbReference>
<dbReference type="GO" id="GO:0009401">
    <property type="term" value="P:phosphoenolpyruvate-dependent sugar phosphotransferase system"/>
    <property type="evidence" value="ECO:0000250"/>
    <property type="project" value="UniProtKB"/>
</dbReference>
<dbReference type="CDD" id="cd05569">
    <property type="entry name" value="PTS_IIB_fructose"/>
    <property type="match status" value="1"/>
</dbReference>
<dbReference type="FunFam" id="3.40.50.2300:FF:000014">
    <property type="entry name" value="PTS system fructose-like transporter subunit IIB"/>
    <property type="match status" value="1"/>
</dbReference>
<dbReference type="Gene3D" id="3.40.50.2300">
    <property type="match status" value="2"/>
</dbReference>
<dbReference type="InterPro" id="IPR050864">
    <property type="entry name" value="Bacterial_PTS_Sugar_Transport"/>
</dbReference>
<dbReference type="InterPro" id="IPR036095">
    <property type="entry name" value="PTS_EIIB-like_sf"/>
</dbReference>
<dbReference type="InterPro" id="IPR013011">
    <property type="entry name" value="PTS_EIIB_2"/>
</dbReference>
<dbReference type="InterPro" id="IPR003501">
    <property type="entry name" value="PTS_EIIB_2/3"/>
</dbReference>
<dbReference type="InterPro" id="IPR013014">
    <property type="entry name" value="PTS_EIIC_2"/>
</dbReference>
<dbReference type="InterPro" id="IPR003353">
    <property type="entry name" value="PTS_IIB_fruc"/>
</dbReference>
<dbReference type="InterPro" id="IPR006327">
    <property type="entry name" value="PTS_IIC_fruc"/>
</dbReference>
<dbReference type="NCBIfam" id="TIGR00829">
    <property type="entry name" value="FRU"/>
    <property type="match status" value="1"/>
</dbReference>
<dbReference type="NCBIfam" id="TIGR01427">
    <property type="entry name" value="PTS_IIC_fructo"/>
    <property type="match status" value="1"/>
</dbReference>
<dbReference type="PANTHER" id="PTHR30505">
    <property type="entry name" value="FRUCTOSE-LIKE PERMEASE"/>
    <property type="match status" value="1"/>
</dbReference>
<dbReference type="PANTHER" id="PTHR30505:SF0">
    <property type="entry name" value="FRUCTOSE-LIKE PTS SYSTEM EIIBC COMPONENT-RELATED"/>
    <property type="match status" value="1"/>
</dbReference>
<dbReference type="Pfam" id="PF02302">
    <property type="entry name" value="PTS_IIB"/>
    <property type="match status" value="1"/>
</dbReference>
<dbReference type="SUPFAM" id="SSF52794">
    <property type="entry name" value="PTS system IIB component-like"/>
    <property type="match status" value="2"/>
</dbReference>
<dbReference type="PROSITE" id="PS51099">
    <property type="entry name" value="PTS_EIIB_TYPE_2"/>
    <property type="match status" value="1"/>
</dbReference>
<dbReference type="PROSITE" id="PS51104">
    <property type="entry name" value="PTS_EIIC_TYPE_2"/>
    <property type="match status" value="1"/>
</dbReference>